<dbReference type="EC" id="2.5.1.91" evidence="2"/>
<dbReference type="EMBL" id="BC085898">
    <property type="protein sequence ID" value="AAH85898.1"/>
    <property type="molecule type" value="mRNA"/>
</dbReference>
<dbReference type="RefSeq" id="NP_001014271.1">
    <property type="nucleotide sequence ID" value="NM_001014249.1"/>
</dbReference>
<dbReference type="SMR" id="Q5U2R1"/>
<dbReference type="FunCoup" id="Q5U2R1">
    <property type="interactions" value="2017"/>
</dbReference>
<dbReference type="STRING" id="10116.ENSRNOP00000059060"/>
<dbReference type="PhosphoSitePlus" id="Q5U2R1"/>
<dbReference type="PaxDb" id="10116-ENSRNOP00000059060"/>
<dbReference type="Ensembl" id="ENSRNOT00000067169.3">
    <property type="protein sequence ID" value="ENSRNOP00000059060.2"/>
    <property type="gene ID" value="ENSRNOG00000042962.3"/>
</dbReference>
<dbReference type="GeneID" id="365592"/>
<dbReference type="KEGG" id="rno:365592"/>
<dbReference type="UCSC" id="RGD:1359372">
    <property type="organism name" value="rat"/>
</dbReference>
<dbReference type="AGR" id="RGD:1359372"/>
<dbReference type="CTD" id="57107"/>
<dbReference type="RGD" id="1359372">
    <property type="gene designation" value="Pdss2"/>
</dbReference>
<dbReference type="eggNOG" id="KOG0776">
    <property type="taxonomic scope" value="Eukaryota"/>
</dbReference>
<dbReference type="GeneTree" id="ENSGT00940000153498"/>
<dbReference type="HOGENOM" id="CLU_014015_3_1_1"/>
<dbReference type="InParanoid" id="Q5U2R1"/>
<dbReference type="OMA" id="YPTSYFS"/>
<dbReference type="PhylomeDB" id="Q5U2R1"/>
<dbReference type="Reactome" id="R-RNO-2142789">
    <property type="pathway name" value="Ubiquinol biosynthesis"/>
</dbReference>
<dbReference type="UniPathway" id="UPA00232"/>
<dbReference type="PRO" id="PR:Q5U2R1"/>
<dbReference type="Proteomes" id="UP000002494">
    <property type="component" value="Chromosome 20"/>
</dbReference>
<dbReference type="Bgee" id="ENSRNOG00000042962">
    <property type="expression patterns" value="Expressed in heart and 20 other cell types or tissues"/>
</dbReference>
<dbReference type="GO" id="GO:0032478">
    <property type="term" value="C:heterotetrameric polyprenyl diphosphate synthase complex"/>
    <property type="evidence" value="ECO:0000266"/>
    <property type="project" value="RGD"/>
</dbReference>
<dbReference type="GO" id="GO:0005739">
    <property type="term" value="C:mitochondrion"/>
    <property type="evidence" value="ECO:0000318"/>
    <property type="project" value="GO_Central"/>
</dbReference>
<dbReference type="GO" id="GO:0032476">
    <property type="term" value="C:polyprenyl diphosphate synthase complex"/>
    <property type="evidence" value="ECO:0000318"/>
    <property type="project" value="GO_Central"/>
</dbReference>
<dbReference type="GO" id="GO:0097269">
    <property type="term" value="F:all-trans-decaprenyl-diphosphate synthase activity"/>
    <property type="evidence" value="ECO:0007669"/>
    <property type="project" value="UniProtKB-EC"/>
</dbReference>
<dbReference type="GO" id="GO:0004659">
    <property type="term" value="F:prenyltransferase activity"/>
    <property type="evidence" value="ECO:0000318"/>
    <property type="project" value="GO_Central"/>
</dbReference>
<dbReference type="GO" id="GO:0046982">
    <property type="term" value="F:protein heterodimerization activity"/>
    <property type="evidence" value="ECO:0000266"/>
    <property type="project" value="RGD"/>
</dbReference>
<dbReference type="GO" id="GO:0021549">
    <property type="term" value="P:cerebellum development"/>
    <property type="evidence" value="ECO:0000250"/>
    <property type="project" value="UniProtKB"/>
</dbReference>
<dbReference type="GO" id="GO:0008299">
    <property type="term" value="P:isoprenoid biosynthetic process"/>
    <property type="evidence" value="ECO:0000266"/>
    <property type="project" value="RGD"/>
</dbReference>
<dbReference type="GO" id="GO:0050878">
    <property type="term" value="P:regulation of body fluid levels"/>
    <property type="evidence" value="ECO:0000266"/>
    <property type="project" value="RGD"/>
</dbReference>
<dbReference type="GO" id="GO:0006744">
    <property type="term" value="P:ubiquinone biosynthetic process"/>
    <property type="evidence" value="ECO:0000266"/>
    <property type="project" value="RGD"/>
</dbReference>
<dbReference type="Gene3D" id="1.10.600.10">
    <property type="entry name" value="Farnesyl Diphosphate Synthase"/>
    <property type="match status" value="1"/>
</dbReference>
<dbReference type="InterPro" id="IPR008949">
    <property type="entry name" value="Isoprenoid_synthase_dom_sf"/>
</dbReference>
<dbReference type="InterPro" id="IPR000092">
    <property type="entry name" value="Polyprenyl_synt"/>
</dbReference>
<dbReference type="PANTHER" id="PTHR12001:SF55">
    <property type="entry name" value="ALL TRANS-POLYPRENYL-DIPHOSPHATE SYNTHASE PDSS2"/>
    <property type="match status" value="1"/>
</dbReference>
<dbReference type="PANTHER" id="PTHR12001">
    <property type="entry name" value="GERANYLGERANYL PYROPHOSPHATE SYNTHASE"/>
    <property type="match status" value="1"/>
</dbReference>
<dbReference type="Pfam" id="PF00348">
    <property type="entry name" value="polyprenyl_synt"/>
    <property type="match status" value="1"/>
</dbReference>
<dbReference type="SUPFAM" id="SSF48576">
    <property type="entry name" value="Terpenoid synthases"/>
    <property type="match status" value="1"/>
</dbReference>
<accession>Q5U2R1</accession>
<feature type="chain" id="PRO_0000123980" description="All trans-polyprenyl-diphosphate synthase PDSS2">
    <location>
        <begin position="1"/>
        <end position="401"/>
    </location>
</feature>
<organism>
    <name type="scientific">Rattus norvegicus</name>
    <name type="common">Rat</name>
    <dbReference type="NCBI Taxonomy" id="10116"/>
    <lineage>
        <taxon>Eukaryota</taxon>
        <taxon>Metazoa</taxon>
        <taxon>Chordata</taxon>
        <taxon>Craniata</taxon>
        <taxon>Vertebrata</taxon>
        <taxon>Euteleostomi</taxon>
        <taxon>Mammalia</taxon>
        <taxon>Eutheria</taxon>
        <taxon>Euarchontoglires</taxon>
        <taxon>Glires</taxon>
        <taxon>Rodentia</taxon>
        <taxon>Myomorpha</taxon>
        <taxon>Muroidea</taxon>
        <taxon>Muridae</taxon>
        <taxon>Murinae</taxon>
        <taxon>Rattus</taxon>
    </lineage>
</organism>
<protein>
    <recommendedName>
        <fullName evidence="3">All trans-polyprenyl-diphosphate synthase PDSS2</fullName>
    </recommendedName>
    <alternativeName>
        <fullName evidence="2">All-trans-decaprenyl-diphosphate synthase subunit 2</fullName>
        <ecNumber evidence="2">2.5.1.91</ecNumber>
    </alternativeName>
    <alternativeName>
        <fullName evidence="4">Decaprenyl-diphosphate synthase subunit 2</fullName>
    </alternativeName>
    <alternativeName>
        <fullName evidence="1">Solanesyl-diphosphate synthase subunit 2</fullName>
    </alternativeName>
</protein>
<name>DLP1_RAT</name>
<gene>
    <name evidence="4" type="primary">Pdss2</name>
    <name evidence="2" type="synonym">Dlp1</name>
</gene>
<keyword id="KW-0414">Isoprene biosynthesis</keyword>
<keyword id="KW-0443">Lipid metabolism</keyword>
<keyword id="KW-0496">Mitochondrion</keyword>
<keyword id="KW-1185">Reference proteome</keyword>
<keyword id="KW-0808">Transferase</keyword>
<keyword id="KW-0831">Ubiquinone biosynthesis</keyword>
<reference key="1">
    <citation type="journal article" date="2004" name="Genome Res.">
        <title>The status, quality, and expansion of the NIH full-length cDNA project: the Mammalian Gene Collection (MGC).</title>
        <authorList>
            <consortium name="The MGC Project Team"/>
        </authorList>
    </citation>
    <scope>NUCLEOTIDE SEQUENCE [LARGE SCALE MRNA]</scope>
    <source>
        <tissue>Heart</tissue>
    </source>
</reference>
<evidence type="ECO:0000250" key="1">
    <source>
        <dbReference type="UniProtKB" id="Q33DR3"/>
    </source>
</evidence>
<evidence type="ECO:0000250" key="2">
    <source>
        <dbReference type="UniProtKB" id="Q86YH6"/>
    </source>
</evidence>
<evidence type="ECO:0000305" key="3"/>
<evidence type="ECO:0000312" key="4">
    <source>
        <dbReference type="RGD" id="1359372"/>
    </source>
</evidence>
<proteinExistence type="evidence at transcript level"/>
<comment type="function">
    <text evidence="1 2">Heterotetrameric enzyme that catalyzes the condensation of farnesyl diphosphate (FPP), which acts as a primer, and isopentenyl diphosphate (IPP) to produce prenyl diphosphates of varying chain lengths and participates in the determination of the side chain of ubiquinone. Supplies nona and decaprenyl diphosphate, the precursors for the side chain of the isoprenoid quinones ubiquinone-9 (Q9) and ubiquinone-10 (Q10) respectively. The enzyme adds isopentenyl diphosphate molecules sequentially to farnesyl diphosphate with trans stereochemistry (By similarity). May play a role during cerebellar development (By similarity). May regulate mitochondrial respiratory chain function (By similarity).</text>
</comment>
<comment type="catalytic activity">
    <reaction evidence="2">
        <text>7 isopentenyl diphosphate + (2E,6E)-farnesyl diphosphate = all-trans-decaprenyl diphosphate + 7 diphosphate</text>
        <dbReference type="Rhea" id="RHEA:27802"/>
        <dbReference type="ChEBI" id="CHEBI:33019"/>
        <dbReference type="ChEBI" id="CHEBI:60721"/>
        <dbReference type="ChEBI" id="CHEBI:128769"/>
        <dbReference type="ChEBI" id="CHEBI:175763"/>
        <dbReference type="EC" id="2.5.1.91"/>
    </reaction>
    <physiologicalReaction direction="left-to-right" evidence="2">
        <dbReference type="Rhea" id="RHEA:27803"/>
    </physiologicalReaction>
</comment>
<comment type="catalytic activity">
    <reaction evidence="1">
        <text>6 isopentenyl diphosphate + (2E,6E)-farnesyl diphosphate = all-trans-nonaprenyl diphosphate + 6 diphosphate</text>
        <dbReference type="Rhea" id="RHEA:55364"/>
        <dbReference type="ChEBI" id="CHEBI:33019"/>
        <dbReference type="ChEBI" id="CHEBI:58391"/>
        <dbReference type="ChEBI" id="CHEBI:128769"/>
        <dbReference type="ChEBI" id="CHEBI:175763"/>
    </reaction>
    <physiologicalReaction direction="left-to-right" evidence="1">
        <dbReference type="Rhea" id="RHEA:55365"/>
    </physiologicalReaction>
</comment>
<comment type="pathway">
    <text evidence="1">Cofactor biosynthesis; ubiquinone biosynthesis.</text>
</comment>
<comment type="subunit">
    <text evidence="1">Heterotetramer composed of 2 PDSS1/DPS1 and 2 PDSS2/DLP1 subunits.</text>
</comment>
<comment type="subcellular location">
    <subcellularLocation>
        <location evidence="3">Mitochondrion</location>
    </subcellularLocation>
</comment>
<comment type="similarity">
    <text evidence="3">Belongs to the FPP/GGPP synthase family.</text>
</comment>
<sequence length="401" mass="44295">MSLRQLLLRLSGYLGASGPPNRHWWYFRSLDTISSVGSWRGRSSRSPAHWNQVVSEAEKIVGYPASFMSLRCLLSDELSNVAMQVRKLVGTQHPLLTTARGFVHDSRHNLQLRGLVVLLISKAAGPSTRNSSSQNYDMVSGIYSCQRNLAEITELIHTALLVHRGIVNLSELQSSDGPLKDMKFGNKIAVLSGDFLLANACNGLALLQNTKVVELLASALMDLVQGIYQENSASTQGNPIPDDIRISTWKEQTFLSHCALLAKSCKAAMELAKHDAAVQDMAFQYGKHMAMSHKINSDLQPFIKDKASDSKTFNLNSAPVVLHQEFLGRDLWIKQIGEAQEKGRLNYTKLRETIKAGKGVTSAIDLCRYHGNKALEALESFPPSEARSALENIVFAVTRFS</sequence>